<keyword id="KW-0028">Amino-acid biosynthesis</keyword>
<keyword id="KW-0170">Cobalt</keyword>
<keyword id="KW-0220">Diaminopimelate biosynthesis</keyword>
<keyword id="KW-0378">Hydrolase</keyword>
<keyword id="KW-0457">Lysine biosynthesis</keyword>
<keyword id="KW-0479">Metal-binding</keyword>
<keyword id="KW-0862">Zinc</keyword>
<organism>
    <name type="scientific">Rickettsia canadensis (strain McKiel)</name>
    <dbReference type="NCBI Taxonomy" id="293613"/>
    <lineage>
        <taxon>Bacteria</taxon>
        <taxon>Pseudomonadati</taxon>
        <taxon>Pseudomonadota</taxon>
        <taxon>Alphaproteobacteria</taxon>
        <taxon>Rickettsiales</taxon>
        <taxon>Rickettsiaceae</taxon>
        <taxon>Rickettsieae</taxon>
        <taxon>Rickettsia</taxon>
        <taxon>belli group</taxon>
    </lineage>
</organism>
<sequence length="384" mass="43353">MYINYLKDLIGFKSVTPESNLAIEYIDDLLKKHGFKTEIKIFGDSKSEQVTNLYAVYGNGKPNICFVGHVDVVPAGDYHLWHNSAPFKANEQDGKIYGRGVVDMKGAIACFLTAALDLIKNNPDFKGSISFLLTSDEEGKAKHGTKEMLQYIYDQEYKIDFAVVGEPTCETEIGDTIKIGRRGSVNFKLNIEGLVGHVAYPHKANNPLSCLIKILNELINIKFDEGTEFFQSSNLEVTNIDVGNNTSNVIPASVEAYFNIRFNNLHNAETLGQLIEQIVKRYCKEYKVDYKLEYISAAESFIQNPNDKIKDFADIVESTLKIKPKFSTSGGTSDARFVKNYCSLVEFGLLSEMAHKINEYTKISDLQKLYDVYYNFLMEMLTNK</sequence>
<protein>
    <recommendedName>
        <fullName evidence="1">Succinyl-diaminopimelate desuccinylase</fullName>
        <shortName evidence="1">SDAP desuccinylase</shortName>
        <ecNumber evidence="1">3.5.1.18</ecNumber>
    </recommendedName>
    <alternativeName>
        <fullName evidence="1">N-succinyl-LL-2,6-diaminoheptanedioate amidohydrolase</fullName>
    </alternativeName>
</protein>
<dbReference type="EC" id="3.5.1.18" evidence="1"/>
<dbReference type="EMBL" id="CP000409">
    <property type="protein sequence ID" value="ABV74028.1"/>
    <property type="molecule type" value="Genomic_DNA"/>
</dbReference>
<dbReference type="RefSeq" id="WP_012149223.1">
    <property type="nucleotide sequence ID" value="NC_009879.1"/>
</dbReference>
<dbReference type="SMR" id="A8F095"/>
<dbReference type="STRING" id="293613.A1E_05585"/>
<dbReference type="KEGG" id="rcm:A1E_05585"/>
<dbReference type="eggNOG" id="COG0624">
    <property type="taxonomic scope" value="Bacteria"/>
</dbReference>
<dbReference type="HOGENOM" id="CLU_021802_4_0_5"/>
<dbReference type="UniPathway" id="UPA00034">
    <property type="reaction ID" value="UER00021"/>
</dbReference>
<dbReference type="Proteomes" id="UP000007056">
    <property type="component" value="Chromosome"/>
</dbReference>
<dbReference type="GO" id="GO:0008777">
    <property type="term" value="F:acetylornithine deacetylase activity"/>
    <property type="evidence" value="ECO:0007669"/>
    <property type="project" value="TreeGrafter"/>
</dbReference>
<dbReference type="GO" id="GO:0050897">
    <property type="term" value="F:cobalt ion binding"/>
    <property type="evidence" value="ECO:0007669"/>
    <property type="project" value="UniProtKB-UniRule"/>
</dbReference>
<dbReference type="GO" id="GO:0009014">
    <property type="term" value="F:succinyl-diaminopimelate desuccinylase activity"/>
    <property type="evidence" value="ECO:0007669"/>
    <property type="project" value="UniProtKB-UniRule"/>
</dbReference>
<dbReference type="GO" id="GO:0008270">
    <property type="term" value="F:zinc ion binding"/>
    <property type="evidence" value="ECO:0007669"/>
    <property type="project" value="UniProtKB-UniRule"/>
</dbReference>
<dbReference type="GO" id="GO:0019877">
    <property type="term" value="P:diaminopimelate biosynthetic process"/>
    <property type="evidence" value="ECO:0007669"/>
    <property type="project" value="UniProtKB-UniRule"/>
</dbReference>
<dbReference type="GO" id="GO:0006526">
    <property type="term" value="P:L-arginine biosynthetic process"/>
    <property type="evidence" value="ECO:0007669"/>
    <property type="project" value="TreeGrafter"/>
</dbReference>
<dbReference type="GO" id="GO:0009089">
    <property type="term" value="P:lysine biosynthetic process via diaminopimelate"/>
    <property type="evidence" value="ECO:0007669"/>
    <property type="project" value="UniProtKB-UniRule"/>
</dbReference>
<dbReference type="CDD" id="cd03891">
    <property type="entry name" value="M20_DapE_proteobac"/>
    <property type="match status" value="1"/>
</dbReference>
<dbReference type="Gene3D" id="3.30.70.360">
    <property type="match status" value="1"/>
</dbReference>
<dbReference type="Gene3D" id="3.40.630.10">
    <property type="entry name" value="Zn peptidases"/>
    <property type="match status" value="1"/>
</dbReference>
<dbReference type="HAMAP" id="MF_01690">
    <property type="entry name" value="DapE"/>
    <property type="match status" value="1"/>
</dbReference>
<dbReference type="InterPro" id="IPR036264">
    <property type="entry name" value="Bact_exopeptidase_dim_dom"/>
</dbReference>
<dbReference type="InterPro" id="IPR005941">
    <property type="entry name" value="DapE_proteobac"/>
</dbReference>
<dbReference type="InterPro" id="IPR002933">
    <property type="entry name" value="Peptidase_M20"/>
</dbReference>
<dbReference type="InterPro" id="IPR011650">
    <property type="entry name" value="Peptidase_M20_dimer"/>
</dbReference>
<dbReference type="InterPro" id="IPR050072">
    <property type="entry name" value="Peptidase_M20A"/>
</dbReference>
<dbReference type="NCBIfam" id="TIGR01246">
    <property type="entry name" value="dapE_proteo"/>
    <property type="match status" value="1"/>
</dbReference>
<dbReference type="NCBIfam" id="NF009557">
    <property type="entry name" value="PRK13009.1"/>
    <property type="match status" value="1"/>
</dbReference>
<dbReference type="PANTHER" id="PTHR43808">
    <property type="entry name" value="ACETYLORNITHINE DEACETYLASE"/>
    <property type="match status" value="1"/>
</dbReference>
<dbReference type="PANTHER" id="PTHR43808:SF31">
    <property type="entry name" value="N-ACETYL-L-CITRULLINE DEACETYLASE"/>
    <property type="match status" value="1"/>
</dbReference>
<dbReference type="Pfam" id="PF07687">
    <property type="entry name" value="M20_dimer"/>
    <property type="match status" value="1"/>
</dbReference>
<dbReference type="Pfam" id="PF01546">
    <property type="entry name" value="Peptidase_M20"/>
    <property type="match status" value="1"/>
</dbReference>
<dbReference type="SUPFAM" id="SSF55031">
    <property type="entry name" value="Bacterial exopeptidase dimerisation domain"/>
    <property type="match status" value="1"/>
</dbReference>
<dbReference type="SUPFAM" id="SSF53187">
    <property type="entry name" value="Zn-dependent exopeptidases"/>
    <property type="match status" value="1"/>
</dbReference>
<comment type="function">
    <text evidence="1">Catalyzes the hydrolysis of N-succinyl-L,L-diaminopimelic acid (SDAP), forming succinate and LL-2,6-diaminopimelate (DAP), an intermediate involved in the bacterial biosynthesis of lysine and meso-diaminopimelic acid, an essential component of bacterial cell walls.</text>
</comment>
<comment type="catalytic activity">
    <reaction evidence="1">
        <text>N-succinyl-(2S,6S)-2,6-diaminopimelate + H2O = (2S,6S)-2,6-diaminopimelate + succinate</text>
        <dbReference type="Rhea" id="RHEA:22608"/>
        <dbReference type="ChEBI" id="CHEBI:15377"/>
        <dbReference type="ChEBI" id="CHEBI:30031"/>
        <dbReference type="ChEBI" id="CHEBI:57609"/>
        <dbReference type="ChEBI" id="CHEBI:58087"/>
        <dbReference type="EC" id="3.5.1.18"/>
    </reaction>
</comment>
<comment type="cofactor">
    <cofactor evidence="1">
        <name>Zn(2+)</name>
        <dbReference type="ChEBI" id="CHEBI:29105"/>
    </cofactor>
    <cofactor evidence="1">
        <name>Co(2+)</name>
        <dbReference type="ChEBI" id="CHEBI:48828"/>
    </cofactor>
    <text evidence="1">Binds 2 Zn(2+) or Co(2+) ions per subunit.</text>
</comment>
<comment type="pathway">
    <text evidence="1">Amino-acid biosynthesis; L-lysine biosynthesis via DAP pathway; LL-2,6-diaminopimelate from (S)-tetrahydrodipicolinate (succinylase route): step 3/3.</text>
</comment>
<comment type="subunit">
    <text evidence="1">Homodimer.</text>
</comment>
<comment type="similarity">
    <text evidence="1">Belongs to the peptidase M20A family. DapE subfamily.</text>
</comment>
<evidence type="ECO:0000255" key="1">
    <source>
        <dbReference type="HAMAP-Rule" id="MF_01690"/>
    </source>
</evidence>
<proteinExistence type="inferred from homology"/>
<reference key="1">
    <citation type="submission" date="2007-09" db="EMBL/GenBank/DDBJ databases">
        <title>Complete genome sequence of Rickettsia canadensis.</title>
        <authorList>
            <person name="Madan A."/>
            <person name="Fahey J."/>
            <person name="Helton E."/>
            <person name="Ketteman M."/>
            <person name="Madan A."/>
            <person name="Rodrigues S."/>
            <person name="Sanchez A."/>
            <person name="Whiting M."/>
            <person name="Dasch G."/>
            <person name="Eremeeva M."/>
        </authorList>
    </citation>
    <scope>NUCLEOTIDE SEQUENCE [LARGE SCALE GENOMIC DNA]</scope>
    <source>
        <strain>McKiel</strain>
    </source>
</reference>
<gene>
    <name evidence="1" type="primary">dapE</name>
    <name type="ordered locus">A1E_05585</name>
</gene>
<feature type="chain" id="PRO_0000375700" description="Succinyl-diaminopimelate desuccinylase">
    <location>
        <begin position="1"/>
        <end position="384"/>
    </location>
</feature>
<feature type="active site" evidence="1">
    <location>
        <position position="71"/>
    </location>
</feature>
<feature type="active site" description="Proton acceptor" evidence="1">
    <location>
        <position position="137"/>
    </location>
</feature>
<feature type="binding site" evidence="1">
    <location>
        <position position="69"/>
    </location>
    <ligand>
        <name>Zn(2+)</name>
        <dbReference type="ChEBI" id="CHEBI:29105"/>
        <label>1</label>
    </ligand>
</feature>
<feature type="binding site" evidence="1">
    <location>
        <position position="103"/>
    </location>
    <ligand>
        <name>Zn(2+)</name>
        <dbReference type="ChEBI" id="CHEBI:29105"/>
        <label>1</label>
    </ligand>
</feature>
<feature type="binding site" evidence="1">
    <location>
        <position position="103"/>
    </location>
    <ligand>
        <name>Zn(2+)</name>
        <dbReference type="ChEBI" id="CHEBI:29105"/>
        <label>2</label>
    </ligand>
</feature>
<feature type="binding site" evidence="1">
    <location>
        <position position="138"/>
    </location>
    <ligand>
        <name>Zn(2+)</name>
        <dbReference type="ChEBI" id="CHEBI:29105"/>
        <label>2</label>
    </ligand>
</feature>
<feature type="binding site" evidence="1">
    <location>
        <position position="166"/>
    </location>
    <ligand>
        <name>Zn(2+)</name>
        <dbReference type="ChEBI" id="CHEBI:29105"/>
        <label>1</label>
    </ligand>
</feature>
<feature type="binding site" evidence="1">
    <location>
        <position position="355"/>
    </location>
    <ligand>
        <name>Zn(2+)</name>
        <dbReference type="ChEBI" id="CHEBI:29105"/>
        <label>2</label>
    </ligand>
</feature>
<accession>A8F095</accession>
<name>DAPE_RICCK</name>